<gene>
    <name evidence="1" type="primary">ruvC</name>
    <name type="ordered locus">CbuK_1794</name>
</gene>
<accession>B6J504</accession>
<feature type="chain" id="PRO_1000090517" description="Crossover junction endodeoxyribonuclease RuvC">
    <location>
        <begin position="1"/>
        <end position="172"/>
    </location>
</feature>
<feature type="active site" evidence="1">
    <location>
        <position position="12"/>
    </location>
</feature>
<feature type="active site" evidence="1">
    <location>
        <position position="71"/>
    </location>
</feature>
<feature type="active site" evidence="1">
    <location>
        <position position="143"/>
    </location>
</feature>
<feature type="binding site" evidence="1">
    <location>
        <position position="12"/>
    </location>
    <ligand>
        <name>Mg(2+)</name>
        <dbReference type="ChEBI" id="CHEBI:18420"/>
        <label>1</label>
    </ligand>
</feature>
<feature type="binding site" evidence="1">
    <location>
        <position position="71"/>
    </location>
    <ligand>
        <name>Mg(2+)</name>
        <dbReference type="ChEBI" id="CHEBI:18420"/>
        <label>2</label>
    </ligand>
</feature>
<feature type="binding site" evidence="1">
    <location>
        <position position="143"/>
    </location>
    <ligand>
        <name>Mg(2+)</name>
        <dbReference type="ChEBI" id="CHEBI:18420"/>
        <label>1</label>
    </ligand>
</feature>
<organism>
    <name type="scientific">Coxiella burnetii (strain CbuK_Q154)</name>
    <name type="common">Coxiella burnetii (strain Q154)</name>
    <dbReference type="NCBI Taxonomy" id="434924"/>
    <lineage>
        <taxon>Bacteria</taxon>
        <taxon>Pseudomonadati</taxon>
        <taxon>Pseudomonadota</taxon>
        <taxon>Gammaproteobacteria</taxon>
        <taxon>Legionellales</taxon>
        <taxon>Coxiellaceae</taxon>
        <taxon>Coxiella</taxon>
    </lineage>
</organism>
<sequence length="172" mass="18638">MDNPRRIIIGIDPGSRITGYGIIWSQGSKQGCIAFGQIKTDNDSLNFRLHQIERELRDLILIHRPHEAAIEQVFTFHNHQSALKLGQARGAALVATAACALPVAEYSARQIKQAVVGYGAATKAQVQHMVHLLLQLEKAPPADAADALAIALCHATSSRLSEKLMQAKGTLT</sequence>
<keyword id="KW-0963">Cytoplasm</keyword>
<keyword id="KW-0227">DNA damage</keyword>
<keyword id="KW-0233">DNA recombination</keyword>
<keyword id="KW-0234">DNA repair</keyword>
<keyword id="KW-0238">DNA-binding</keyword>
<keyword id="KW-0255">Endonuclease</keyword>
<keyword id="KW-0378">Hydrolase</keyword>
<keyword id="KW-0460">Magnesium</keyword>
<keyword id="KW-0479">Metal-binding</keyword>
<keyword id="KW-0540">Nuclease</keyword>
<reference key="1">
    <citation type="journal article" date="2009" name="Infect. Immun.">
        <title>Comparative genomics reveal extensive transposon-mediated genomic plasticity and diversity among potential effector proteins within the genus Coxiella.</title>
        <authorList>
            <person name="Beare P.A."/>
            <person name="Unsworth N."/>
            <person name="Andoh M."/>
            <person name="Voth D.E."/>
            <person name="Omsland A."/>
            <person name="Gilk S.D."/>
            <person name="Williams K.P."/>
            <person name="Sobral B.W."/>
            <person name="Kupko J.J. III"/>
            <person name="Porcella S.F."/>
            <person name="Samuel J.E."/>
            <person name="Heinzen R.A."/>
        </authorList>
    </citation>
    <scope>NUCLEOTIDE SEQUENCE [LARGE SCALE GENOMIC DNA]</scope>
    <source>
        <strain>CbuK_Q154</strain>
    </source>
</reference>
<name>RUVC_COXB1</name>
<proteinExistence type="inferred from homology"/>
<evidence type="ECO:0000255" key="1">
    <source>
        <dbReference type="HAMAP-Rule" id="MF_00034"/>
    </source>
</evidence>
<dbReference type="EC" id="3.1.21.10" evidence="1"/>
<dbReference type="EMBL" id="CP001020">
    <property type="protein sequence ID" value="ACJ20921.1"/>
    <property type="molecule type" value="Genomic_DNA"/>
</dbReference>
<dbReference type="RefSeq" id="WP_005772101.1">
    <property type="nucleotide sequence ID" value="NC_011528.1"/>
</dbReference>
<dbReference type="SMR" id="B6J504"/>
<dbReference type="KEGG" id="cbc:CbuK_1794"/>
<dbReference type="HOGENOM" id="CLU_091257_2_1_6"/>
<dbReference type="GO" id="GO:0005737">
    <property type="term" value="C:cytoplasm"/>
    <property type="evidence" value="ECO:0007669"/>
    <property type="project" value="UniProtKB-SubCell"/>
</dbReference>
<dbReference type="GO" id="GO:0048476">
    <property type="term" value="C:Holliday junction resolvase complex"/>
    <property type="evidence" value="ECO:0007669"/>
    <property type="project" value="UniProtKB-UniRule"/>
</dbReference>
<dbReference type="GO" id="GO:0008821">
    <property type="term" value="F:crossover junction DNA endonuclease activity"/>
    <property type="evidence" value="ECO:0007669"/>
    <property type="project" value="UniProtKB-UniRule"/>
</dbReference>
<dbReference type="GO" id="GO:0003677">
    <property type="term" value="F:DNA binding"/>
    <property type="evidence" value="ECO:0007669"/>
    <property type="project" value="UniProtKB-KW"/>
</dbReference>
<dbReference type="GO" id="GO:0000287">
    <property type="term" value="F:magnesium ion binding"/>
    <property type="evidence" value="ECO:0007669"/>
    <property type="project" value="UniProtKB-UniRule"/>
</dbReference>
<dbReference type="GO" id="GO:0006310">
    <property type="term" value="P:DNA recombination"/>
    <property type="evidence" value="ECO:0007669"/>
    <property type="project" value="UniProtKB-UniRule"/>
</dbReference>
<dbReference type="GO" id="GO:0006281">
    <property type="term" value="P:DNA repair"/>
    <property type="evidence" value="ECO:0007669"/>
    <property type="project" value="UniProtKB-UniRule"/>
</dbReference>
<dbReference type="CDD" id="cd16962">
    <property type="entry name" value="RuvC"/>
    <property type="match status" value="1"/>
</dbReference>
<dbReference type="FunFam" id="3.30.420.10:FF:000002">
    <property type="entry name" value="Crossover junction endodeoxyribonuclease RuvC"/>
    <property type="match status" value="1"/>
</dbReference>
<dbReference type="Gene3D" id="3.30.420.10">
    <property type="entry name" value="Ribonuclease H-like superfamily/Ribonuclease H"/>
    <property type="match status" value="1"/>
</dbReference>
<dbReference type="HAMAP" id="MF_00034">
    <property type="entry name" value="RuvC"/>
    <property type="match status" value="1"/>
</dbReference>
<dbReference type="InterPro" id="IPR012337">
    <property type="entry name" value="RNaseH-like_sf"/>
</dbReference>
<dbReference type="InterPro" id="IPR036397">
    <property type="entry name" value="RNaseH_sf"/>
</dbReference>
<dbReference type="InterPro" id="IPR020563">
    <property type="entry name" value="X-over_junc_endoDNase_Mg_BS"/>
</dbReference>
<dbReference type="InterPro" id="IPR002176">
    <property type="entry name" value="X-over_junc_endoDNase_RuvC"/>
</dbReference>
<dbReference type="NCBIfam" id="TIGR00228">
    <property type="entry name" value="ruvC"/>
    <property type="match status" value="1"/>
</dbReference>
<dbReference type="PANTHER" id="PTHR30194">
    <property type="entry name" value="CROSSOVER JUNCTION ENDODEOXYRIBONUCLEASE RUVC"/>
    <property type="match status" value="1"/>
</dbReference>
<dbReference type="PANTHER" id="PTHR30194:SF3">
    <property type="entry name" value="CROSSOVER JUNCTION ENDODEOXYRIBONUCLEASE RUVC"/>
    <property type="match status" value="1"/>
</dbReference>
<dbReference type="Pfam" id="PF02075">
    <property type="entry name" value="RuvC"/>
    <property type="match status" value="1"/>
</dbReference>
<dbReference type="PRINTS" id="PR00696">
    <property type="entry name" value="RSOLVASERUVC"/>
</dbReference>
<dbReference type="SUPFAM" id="SSF53098">
    <property type="entry name" value="Ribonuclease H-like"/>
    <property type="match status" value="1"/>
</dbReference>
<dbReference type="PROSITE" id="PS01321">
    <property type="entry name" value="RUVC"/>
    <property type="match status" value="1"/>
</dbReference>
<comment type="function">
    <text evidence="1">The RuvA-RuvB-RuvC complex processes Holliday junction (HJ) DNA during genetic recombination and DNA repair. Endonuclease that resolves HJ intermediates. Cleaves cruciform DNA by making single-stranded nicks across the HJ at symmetrical positions within the homologous arms, yielding a 5'-phosphate and a 3'-hydroxyl group; requires a central core of homology in the junction. The consensus cleavage sequence is 5'-(A/T)TT(C/G)-3'. Cleavage occurs on the 3'-side of the TT dinucleotide at the point of strand exchange. HJ branch migration catalyzed by RuvA-RuvB allows RuvC to scan DNA until it finds its consensus sequence, where it cleaves and resolves the cruciform DNA.</text>
</comment>
<comment type="catalytic activity">
    <reaction evidence="1">
        <text>Endonucleolytic cleavage at a junction such as a reciprocal single-stranded crossover between two homologous DNA duplexes (Holliday junction).</text>
        <dbReference type="EC" id="3.1.21.10"/>
    </reaction>
</comment>
<comment type="cofactor">
    <cofactor evidence="1">
        <name>Mg(2+)</name>
        <dbReference type="ChEBI" id="CHEBI:18420"/>
    </cofactor>
    <text evidence="1">Binds 2 Mg(2+) ion per subunit.</text>
</comment>
<comment type="subunit">
    <text evidence="1">Homodimer which binds Holliday junction (HJ) DNA. The HJ becomes 2-fold symmetrical on binding to RuvC with unstacked arms; it has a different conformation from HJ DNA in complex with RuvA. In the full resolvosome a probable DNA-RuvA(4)-RuvB(12)-RuvC(2) complex forms which resolves the HJ.</text>
</comment>
<comment type="subcellular location">
    <subcellularLocation>
        <location evidence="1">Cytoplasm</location>
    </subcellularLocation>
</comment>
<comment type="similarity">
    <text evidence="1">Belongs to the RuvC family.</text>
</comment>
<protein>
    <recommendedName>
        <fullName evidence="1">Crossover junction endodeoxyribonuclease RuvC</fullName>
        <ecNumber evidence="1">3.1.21.10</ecNumber>
    </recommendedName>
    <alternativeName>
        <fullName evidence="1">Holliday junction nuclease RuvC</fullName>
    </alternativeName>
    <alternativeName>
        <fullName evidence="1">Holliday junction resolvase RuvC</fullName>
    </alternativeName>
</protein>